<reference key="1">
    <citation type="journal article" date="2007" name="PLoS ONE">
        <title>Molecular correlates of host specialization in Staphylococcus aureus.</title>
        <authorList>
            <person name="Herron-Olson L."/>
            <person name="Fitzgerald J.R."/>
            <person name="Musser J.M."/>
            <person name="Kapur V."/>
        </authorList>
    </citation>
    <scope>NUCLEOTIDE SEQUENCE [LARGE SCALE GENOMIC DNA]</scope>
    <source>
        <strain>bovine RF122 / ET3-1</strain>
    </source>
</reference>
<comment type="function">
    <text evidence="1">Produces ATP from ADP in the presence of a proton gradient across the membrane. The gamma chain is believed to be important in regulating ATPase activity and the flow of protons through the CF(0) complex.</text>
</comment>
<comment type="subunit">
    <text evidence="1">F-type ATPases have 2 components, CF(1) - the catalytic core - and CF(0) - the membrane proton channel. CF(1) has five subunits: alpha(3), beta(3), gamma(1), delta(1), epsilon(1). CF(0) has three main subunits: a, b and c.</text>
</comment>
<comment type="subcellular location">
    <subcellularLocation>
        <location evidence="1">Cell membrane</location>
        <topology evidence="1">Peripheral membrane protein</topology>
    </subcellularLocation>
</comment>
<comment type="similarity">
    <text evidence="1">Belongs to the ATPase gamma chain family.</text>
</comment>
<proteinExistence type="inferred from homology"/>
<protein>
    <recommendedName>
        <fullName evidence="1">ATP synthase gamma chain</fullName>
    </recommendedName>
    <alternativeName>
        <fullName evidence="1">ATP synthase F1 sector gamma subunit</fullName>
    </alternativeName>
    <alternativeName>
        <fullName evidence="1">F-ATPase gamma subunit</fullName>
    </alternativeName>
</protein>
<name>ATPG_STAAB</name>
<accession>Q2YUK0</accession>
<sequence length="288" mass="32076">MASLKEIDTRIKSTKKMKQITKAMNMVSSSKLRRAEKNTKQFTPYMDKMQDAITAVAGASSNTNHPMLRPRKITRSGYLVITSDKGLAGAYSANVLKKLITDIEAKHQDSSEYGIVVLGQQGVDFLKNRGYDIEYSQVDVPDQPSFKSVQALANHAIDLYSEEEIDELNIYYSHYVSVLENKPTSRQVLPLSQEDSSKGHGHLSSYEFEPDKESILSVILPQYVESLIYGTILDAKASEHATRMTAMKNATDNATELIDDLSLEYNRARQAEITQQITEIVGGSAALE</sequence>
<evidence type="ECO:0000255" key="1">
    <source>
        <dbReference type="HAMAP-Rule" id="MF_00815"/>
    </source>
</evidence>
<organism>
    <name type="scientific">Staphylococcus aureus (strain bovine RF122 / ET3-1)</name>
    <dbReference type="NCBI Taxonomy" id="273036"/>
    <lineage>
        <taxon>Bacteria</taxon>
        <taxon>Bacillati</taxon>
        <taxon>Bacillota</taxon>
        <taxon>Bacilli</taxon>
        <taxon>Bacillales</taxon>
        <taxon>Staphylococcaceae</taxon>
        <taxon>Staphylococcus</taxon>
    </lineage>
</organism>
<feature type="chain" id="PRO_1000053346" description="ATP synthase gamma chain">
    <location>
        <begin position="1"/>
        <end position="288"/>
    </location>
</feature>
<gene>
    <name evidence="1" type="primary">atpG</name>
    <name type="ordered locus">SAB1988c</name>
</gene>
<dbReference type="EMBL" id="AJ938182">
    <property type="protein sequence ID" value="CAI81677.1"/>
    <property type="molecule type" value="Genomic_DNA"/>
</dbReference>
<dbReference type="RefSeq" id="WP_000157598.1">
    <property type="nucleotide sequence ID" value="NC_007622.1"/>
</dbReference>
<dbReference type="SMR" id="Q2YUK0"/>
<dbReference type="KEGG" id="sab:SAB1988c"/>
<dbReference type="HOGENOM" id="CLU_050669_0_1_9"/>
<dbReference type="GO" id="GO:0005886">
    <property type="term" value="C:plasma membrane"/>
    <property type="evidence" value="ECO:0007669"/>
    <property type="project" value="UniProtKB-SubCell"/>
</dbReference>
<dbReference type="GO" id="GO:0045259">
    <property type="term" value="C:proton-transporting ATP synthase complex"/>
    <property type="evidence" value="ECO:0007669"/>
    <property type="project" value="UniProtKB-KW"/>
</dbReference>
<dbReference type="GO" id="GO:0005524">
    <property type="term" value="F:ATP binding"/>
    <property type="evidence" value="ECO:0007669"/>
    <property type="project" value="UniProtKB-UniRule"/>
</dbReference>
<dbReference type="GO" id="GO:0046933">
    <property type="term" value="F:proton-transporting ATP synthase activity, rotational mechanism"/>
    <property type="evidence" value="ECO:0007669"/>
    <property type="project" value="UniProtKB-UniRule"/>
</dbReference>
<dbReference type="GO" id="GO:0042777">
    <property type="term" value="P:proton motive force-driven plasma membrane ATP synthesis"/>
    <property type="evidence" value="ECO:0007669"/>
    <property type="project" value="UniProtKB-UniRule"/>
</dbReference>
<dbReference type="CDD" id="cd12151">
    <property type="entry name" value="F1-ATPase_gamma"/>
    <property type="match status" value="1"/>
</dbReference>
<dbReference type="FunFam" id="1.10.287.80:FF:000019">
    <property type="entry name" value="ATP synthase gamma chain"/>
    <property type="match status" value="1"/>
</dbReference>
<dbReference type="FunFam" id="3.40.1380.10:FF:000002">
    <property type="entry name" value="ATP synthase gamma chain"/>
    <property type="match status" value="1"/>
</dbReference>
<dbReference type="Gene3D" id="3.40.1380.10">
    <property type="match status" value="1"/>
</dbReference>
<dbReference type="Gene3D" id="1.10.287.80">
    <property type="entry name" value="ATP synthase, gamma subunit, helix hairpin domain"/>
    <property type="match status" value="1"/>
</dbReference>
<dbReference type="HAMAP" id="MF_00815">
    <property type="entry name" value="ATP_synth_gamma_bact"/>
    <property type="match status" value="1"/>
</dbReference>
<dbReference type="InterPro" id="IPR035968">
    <property type="entry name" value="ATP_synth_F1_ATPase_gsu"/>
</dbReference>
<dbReference type="InterPro" id="IPR000131">
    <property type="entry name" value="ATP_synth_F1_gsu"/>
</dbReference>
<dbReference type="NCBIfam" id="TIGR01146">
    <property type="entry name" value="ATPsyn_F1gamma"/>
    <property type="match status" value="1"/>
</dbReference>
<dbReference type="PANTHER" id="PTHR11693">
    <property type="entry name" value="ATP SYNTHASE GAMMA CHAIN"/>
    <property type="match status" value="1"/>
</dbReference>
<dbReference type="PANTHER" id="PTHR11693:SF22">
    <property type="entry name" value="ATP SYNTHASE SUBUNIT GAMMA, MITOCHONDRIAL"/>
    <property type="match status" value="1"/>
</dbReference>
<dbReference type="Pfam" id="PF00231">
    <property type="entry name" value="ATP-synt"/>
    <property type="match status" value="1"/>
</dbReference>
<dbReference type="PRINTS" id="PR00126">
    <property type="entry name" value="ATPASEGAMMA"/>
</dbReference>
<dbReference type="SUPFAM" id="SSF52943">
    <property type="entry name" value="ATP synthase (F1-ATPase), gamma subunit"/>
    <property type="match status" value="1"/>
</dbReference>
<keyword id="KW-0066">ATP synthesis</keyword>
<keyword id="KW-1003">Cell membrane</keyword>
<keyword id="KW-0139">CF(1)</keyword>
<keyword id="KW-0375">Hydrogen ion transport</keyword>
<keyword id="KW-0406">Ion transport</keyword>
<keyword id="KW-0472">Membrane</keyword>
<keyword id="KW-0813">Transport</keyword>